<reference key="1">
    <citation type="submission" date="2007-02" db="EMBL/GenBank/DDBJ databases">
        <title>Complete sequence of chromosome of Shewanella baltica OS155.</title>
        <authorList>
            <consortium name="US DOE Joint Genome Institute"/>
            <person name="Copeland A."/>
            <person name="Lucas S."/>
            <person name="Lapidus A."/>
            <person name="Barry K."/>
            <person name="Detter J.C."/>
            <person name="Glavina del Rio T."/>
            <person name="Hammon N."/>
            <person name="Israni S."/>
            <person name="Dalin E."/>
            <person name="Tice H."/>
            <person name="Pitluck S."/>
            <person name="Sims D.R."/>
            <person name="Brettin T."/>
            <person name="Bruce D."/>
            <person name="Han C."/>
            <person name="Tapia R."/>
            <person name="Brainard J."/>
            <person name="Schmutz J."/>
            <person name="Larimer F."/>
            <person name="Land M."/>
            <person name="Hauser L."/>
            <person name="Kyrpides N."/>
            <person name="Mikhailova N."/>
            <person name="Brettar I."/>
            <person name="Klappenbach J."/>
            <person name="Konstantinidis K."/>
            <person name="Rodrigues J."/>
            <person name="Tiedje J."/>
            <person name="Richardson P."/>
        </authorList>
    </citation>
    <scope>NUCLEOTIDE SEQUENCE [LARGE SCALE GENOMIC DNA]</scope>
    <source>
        <strain>OS155 / ATCC BAA-1091</strain>
    </source>
</reference>
<keyword id="KW-0255">Endonuclease</keyword>
<keyword id="KW-0378">Hydrolase</keyword>
<keyword id="KW-0540">Nuclease</keyword>
<keyword id="KW-1185">Reference proteome</keyword>
<keyword id="KW-0694">RNA-binding</keyword>
<keyword id="KW-0699">rRNA-binding</keyword>
<protein>
    <recommendedName>
        <fullName evidence="1">Ribosome rescue factor SmrB</fullName>
        <ecNumber evidence="1">3.1.-.-</ecNumber>
    </recommendedName>
</protein>
<organism>
    <name type="scientific">Shewanella baltica (strain OS155 / ATCC BAA-1091)</name>
    <dbReference type="NCBI Taxonomy" id="325240"/>
    <lineage>
        <taxon>Bacteria</taxon>
        <taxon>Pseudomonadati</taxon>
        <taxon>Pseudomonadota</taxon>
        <taxon>Gammaproteobacteria</taxon>
        <taxon>Alteromonadales</taxon>
        <taxon>Shewanellaceae</taxon>
        <taxon>Shewanella</taxon>
    </lineage>
</organism>
<comment type="function">
    <text evidence="1">Acts as a ribosome collision sensor. Detects stalled/collided disomes (pairs of ribosomes where the leading ribosome is stalled and a second ribosome has collided with it) and endonucleolytically cleaves mRNA at the 5' boundary of the stalled ribosome. Stalled/collided disomes form a new interface (primarily via the 30S subunits) that binds SmrB. Cleaved mRNA becomes available for tmRNA ligation, leading to ribosomal subunit dissociation and rescue of stalled ribosomes.</text>
</comment>
<comment type="subunit">
    <text evidence="1">Associates with collided ribosomes, but not with correctly translating polysomes.</text>
</comment>
<comment type="similarity">
    <text evidence="1">Belongs to the SmrB family.</text>
</comment>
<accession>A3D678</accession>
<feature type="chain" id="PRO_1000084358" description="Ribosome rescue factor SmrB">
    <location>
        <begin position="1"/>
        <end position="176"/>
    </location>
</feature>
<feature type="domain" description="Smr" evidence="1">
    <location>
        <begin position="93"/>
        <end position="168"/>
    </location>
</feature>
<dbReference type="EC" id="3.1.-.-" evidence="1"/>
<dbReference type="EMBL" id="CP000563">
    <property type="protein sequence ID" value="ABN62241.1"/>
    <property type="molecule type" value="Genomic_DNA"/>
</dbReference>
<dbReference type="RefSeq" id="WP_011847186.1">
    <property type="nucleotide sequence ID" value="NC_009052.1"/>
</dbReference>
<dbReference type="SMR" id="A3D678"/>
<dbReference type="STRING" id="325240.Sbal_2754"/>
<dbReference type="KEGG" id="sbl:Sbal_2754"/>
<dbReference type="HOGENOM" id="CLU_055978_4_0_6"/>
<dbReference type="OrthoDB" id="5795446at2"/>
<dbReference type="Proteomes" id="UP000001557">
    <property type="component" value="Chromosome"/>
</dbReference>
<dbReference type="GO" id="GO:0004521">
    <property type="term" value="F:RNA endonuclease activity"/>
    <property type="evidence" value="ECO:0007669"/>
    <property type="project" value="UniProtKB-UniRule"/>
</dbReference>
<dbReference type="GO" id="GO:0019843">
    <property type="term" value="F:rRNA binding"/>
    <property type="evidence" value="ECO:0007669"/>
    <property type="project" value="UniProtKB-UniRule"/>
</dbReference>
<dbReference type="GO" id="GO:0072344">
    <property type="term" value="P:rescue of stalled ribosome"/>
    <property type="evidence" value="ECO:0007669"/>
    <property type="project" value="UniProtKB-UniRule"/>
</dbReference>
<dbReference type="Gene3D" id="3.30.1370.110">
    <property type="match status" value="1"/>
</dbReference>
<dbReference type="HAMAP" id="MF_01042">
    <property type="entry name" value="SmrB"/>
    <property type="match status" value="1"/>
</dbReference>
<dbReference type="InterPro" id="IPR002625">
    <property type="entry name" value="Smr_dom"/>
</dbReference>
<dbReference type="InterPro" id="IPR036063">
    <property type="entry name" value="Smr_dom_sf"/>
</dbReference>
<dbReference type="InterPro" id="IPR022990">
    <property type="entry name" value="SmrB-like"/>
</dbReference>
<dbReference type="NCBIfam" id="NF003432">
    <property type="entry name" value="PRK04946.1"/>
    <property type="match status" value="1"/>
</dbReference>
<dbReference type="PANTHER" id="PTHR35562">
    <property type="entry name" value="DNA ENDONUCLEASE SMRA-RELATED"/>
    <property type="match status" value="1"/>
</dbReference>
<dbReference type="PANTHER" id="PTHR35562:SF1">
    <property type="entry name" value="UPF0115 PROTEIN YFCN"/>
    <property type="match status" value="1"/>
</dbReference>
<dbReference type="Pfam" id="PF01713">
    <property type="entry name" value="Smr"/>
    <property type="match status" value="1"/>
</dbReference>
<dbReference type="SMART" id="SM00463">
    <property type="entry name" value="SMR"/>
    <property type="match status" value="1"/>
</dbReference>
<dbReference type="SUPFAM" id="SSF160443">
    <property type="entry name" value="SMR domain-like"/>
    <property type="match status" value="1"/>
</dbReference>
<dbReference type="PROSITE" id="PS50828">
    <property type="entry name" value="SMR"/>
    <property type="match status" value="1"/>
</dbReference>
<evidence type="ECO:0000255" key="1">
    <source>
        <dbReference type="HAMAP-Rule" id="MF_01042"/>
    </source>
</evidence>
<sequence>MNKDDDKEGLAMFSALIDGIKPITQNKRHFRTPIKTKQEIELKEQQLHANSYFSDTYQPLLPVQGPMRWLEEGVDSLELKRLRRGDYQPDLLLDLHGYRQSEAKLELAALIQACVKQQSLCCCIMHGYGSGILKQQVPMWLVQHPMVKAFHQAPKEWGGDAALLVLIDIGEQPHRR</sequence>
<proteinExistence type="inferred from homology"/>
<gene>
    <name evidence="1" type="primary">smrB</name>
    <name type="ordered locus">Sbal_2754</name>
</gene>
<name>SMRB_SHEB5</name>